<evidence type="ECO:0000255" key="1">
    <source>
        <dbReference type="HAMAP-Rule" id="MF_01360"/>
    </source>
</evidence>
<comment type="similarity">
    <text evidence="1">Belongs to the UPF0367 family.</text>
</comment>
<sequence>MFVIELALKFSPLPLAVQRKKLEDAKALYNTVRECLENGHPKLLELNCEQLKDKKIAVLSSELLAVQIYEKTAVGGGIKRPGFSFDE</sequence>
<dbReference type="EMBL" id="CP000878">
    <property type="protein sequence ID" value="ABX08070.1"/>
    <property type="molecule type" value="Genomic_DNA"/>
</dbReference>
<dbReference type="RefSeq" id="WP_012194695.1">
    <property type="nucleotide sequence ID" value="NC_009976.1"/>
</dbReference>
<dbReference type="STRING" id="93059.P9211_01391"/>
<dbReference type="KEGG" id="pmj:P9211_01391"/>
<dbReference type="eggNOG" id="ENOG5032YB3">
    <property type="taxonomic scope" value="Bacteria"/>
</dbReference>
<dbReference type="HOGENOM" id="CLU_180777_0_0_3"/>
<dbReference type="OrthoDB" id="516864at2"/>
<dbReference type="Proteomes" id="UP000000788">
    <property type="component" value="Chromosome"/>
</dbReference>
<dbReference type="HAMAP" id="MF_01360">
    <property type="entry name" value="UPF0367"/>
    <property type="match status" value="1"/>
</dbReference>
<dbReference type="InterPro" id="IPR020885">
    <property type="entry name" value="UPF0367"/>
</dbReference>
<dbReference type="NCBIfam" id="NF010236">
    <property type="entry name" value="PRK13683.1"/>
    <property type="match status" value="1"/>
</dbReference>
<reference key="1">
    <citation type="journal article" date="2007" name="PLoS Genet.">
        <title>Patterns and implications of gene gain and loss in the evolution of Prochlorococcus.</title>
        <authorList>
            <person name="Kettler G.C."/>
            <person name="Martiny A.C."/>
            <person name="Huang K."/>
            <person name="Zucker J."/>
            <person name="Coleman M.L."/>
            <person name="Rodrigue S."/>
            <person name="Chen F."/>
            <person name="Lapidus A."/>
            <person name="Ferriera S."/>
            <person name="Johnson J."/>
            <person name="Steglich C."/>
            <person name="Church G.M."/>
            <person name="Richardson P."/>
            <person name="Chisholm S.W."/>
        </authorList>
    </citation>
    <scope>NUCLEOTIDE SEQUENCE [LARGE SCALE GENOMIC DNA]</scope>
    <source>
        <strain>MIT 9211</strain>
    </source>
</reference>
<protein>
    <recommendedName>
        <fullName evidence="1">UPF0367 protein P9211_01391</fullName>
    </recommendedName>
</protein>
<accession>A9BCY2</accession>
<feature type="chain" id="PRO_1000143696" description="UPF0367 protein P9211_01391">
    <location>
        <begin position="1"/>
        <end position="87"/>
    </location>
</feature>
<name>Y139_PROM4</name>
<keyword id="KW-1185">Reference proteome</keyword>
<gene>
    <name type="ordered locus">P9211_01391</name>
</gene>
<organism>
    <name type="scientific">Prochlorococcus marinus (strain MIT 9211)</name>
    <dbReference type="NCBI Taxonomy" id="93059"/>
    <lineage>
        <taxon>Bacteria</taxon>
        <taxon>Bacillati</taxon>
        <taxon>Cyanobacteriota</taxon>
        <taxon>Cyanophyceae</taxon>
        <taxon>Synechococcales</taxon>
        <taxon>Prochlorococcaceae</taxon>
        <taxon>Prochlorococcus</taxon>
    </lineage>
</organism>
<proteinExistence type="inferred from homology"/>